<protein>
    <recommendedName>
        <fullName evidence="1">Large ribosomal subunit protein uL5</fullName>
    </recommendedName>
    <alternativeName>
        <fullName evidence="2">50S ribosomal protein L5</fullName>
    </alternativeName>
</protein>
<gene>
    <name evidence="1" type="primary">rpl5</name>
    <name type="synonym">rplE</name>
    <name type="ordered locus">MK1221</name>
</gene>
<reference key="1">
    <citation type="journal article" date="2002" name="Proc. Natl. Acad. Sci. U.S.A.">
        <title>The complete genome of hyperthermophile Methanopyrus kandleri AV19 and monophyly of archaeal methanogens.</title>
        <authorList>
            <person name="Slesarev A.I."/>
            <person name="Mezhevaya K.V."/>
            <person name="Makarova K.S."/>
            <person name="Polushin N.N."/>
            <person name="Shcherbinina O.V."/>
            <person name="Shakhova V.V."/>
            <person name="Belova G.I."/>
            <person name="Aravind L."/>
            <person name="Natale D.A."/>
            <person name="Rogozin I.B."/>
            <person name="Tatusov R.L."/>
            <person name="Wolf Y.I."/>
            <person name="Stetter K.O."/>
            <person name="Malykh A.G."/>
            <person name="Koonin E.V."/>
            <person name="Kozyavkin S.A."/>
        </authorList>
    </citation>
    <scope>NUCLEOTIDE SEQUENCE [LARGE SCALE GENOMIC DNA]</scope>
    <source>
        <strain>AV19 / DSM 6324 / JCM 9639 / NBRC 100938</strain>
    </source>
</reference>
<comment type="function">
    <text evidence="1">This is one of the proteins that bind and probably mediate the attachment of the 5S RNA into the large ribosomal subunit, where it forms part of the central protuberance. In the 70S ribosome it contacts protein S13 of the 30S subunit (bridge B1b), connecting the 2 subunits; this bridge is implicated in subunit movement. May contact the P site tRNA; the 5S rRNA and some of its associated proteins might help stabilize positioning of ribosome-bound tRNAs.</text>
</comment>
<comment type="subunit">
    <text evidence="1">Part of the 50S ribosomal subunit; contacts the 5S rRNA and probably tRNA. Forms a bridge to the 30S subunit in the 70S ribosome.</text>
</comment>
<comment type="similarity">
    <text evidence="1">Belongs to the universal ribosomal protein uL5 family.</text>
</comment>
<accession>Q8TW17</accession>
<dbReference type="EMBL" id="AE009439">
    <property type="protein sequence ID" value="AAM02434.1"/>
    <property type="molecule type" value="Genomic_DNA"/>
</dbReference>
<dbReference type="RefSeq" id="WP_011019589.1">
    <property type="nucleotide sequence ID" value="NC_003551.1"/>
</dbReference>
<dbReference type="SMR" id="Q8TW17"/>
<dbReference type="FunCoup" id="Q8TW17">
    <property type="interactions" value="144"/>
</dbReference>
<dbReference type="STRING" id="190192.MK1221"/>
<dbReference type="PaxDb" id="190192-MK1221"/>
<dbReference type="EnsemblBacteria" id="AAM02434">
    <property type="protein sequence ID" value="AAM02434"/>
    <property type="gene ID" value="MK1221"/>
</dbReference>
<dbReference type="GeneID" id="1477816"/>
<dbReference type="KEGG" id="mka:MK1221"/>
<dbReference type="PATRIC" id="fig|190192.8.peg.1324"/>
<dbReference type="HOGENOM" id="CLU_061015_3_0_2"/>
<dbReference type="InParanoid" id="Q8TW17"/>
<dbReference type="OrthoDB" id="372044at2157"/>
<dbReference type="Proteomes" id="UP000001826">
    <property type="component" value="Chromosome"/>
</dbReference>
<dbReference type="GO" id="GO:1990904">
    <property type="term" value="C:ribonucleoprotein complex"/>
    <property type="evidence" value="ECO:0007669"/>
    <property type="project" value="UniProtKB-KW"/>
</dbReference>
<dbReference type="GO" id="GO:0005840">
    <property type="term" value="C:ribosome"/>
    <property type="evidence" value="ECO:0007669"/>
    <property type="project" value="UniProtKB-KW"/>
</dbReference>
<dbReference type="GO" id="GO:0019843">
    <property type="term" value="F:rRNA binding"/>
    <property type="evidence" value="ECO:0007669"/>
    <property type="project" value="UniProtKB-UniRule"/>
</dbReference>
<dbReference type="GO" id="GO:0003735">
    <property type="term" value="F:structural constituent of ribosome"/>
    <property type="evidence" value="ECO:0007669"/>
    <property type="project" value="InterPro"/>
</dbReference>
<dbReference type="GO" id="GO:0000049">
    <property type="term" value="F:tRNA binding"/>
    <property type="evidence" value="ECO:0007669"/>
    <property type="project" value="UniProtKB-UniRule"/>
</dbReference>
<dbReference type="GO" id="GO:0006412">
    <property type="term" value="P:translation"/>
    <property type="evidence" value="ECO:0007669"/>
    <property type="project" value="UniProtKB-UniRule"/>
</dbReference>
<dbReference type="FunFam" id="3.30.1440.10:FF:000002">
    <property type="entry name" value="60S ribosomal protein L11"/>
    <property type="match status" value="1"/>
</dbReference>
<dbReference type="Gene3D" id="3.30.1440.10">
    <property type="match status" value="1"/>
</dbReference>
<dbReference type="HAMAP" id="MF_01333_A">
    <property type="entry name" value="Ribosomal_uL5_A"/>
    <property type="match status" value="1"/>
</dbReference>
<dbReference type="InterPro" id="IPR002132">
    <property type="entry name" value="Ribosomal_uL5"/>
</dbReference>
<dbReference type="InterPro" id="IPR022804">
    <property type="entry name" value="Ribosomal_uL5_arc"/>
</dbReference>
<dbReference type="InterPro" id="IPR031309">
    <property type="entry name" value="Ribosomal_uL5_C"/>
</dbReference>
<dbReference type="InterPro" id="IPR020929">
    <property type="entry name" value="Ribosomal_uL5_CS"/>
</dbReference>
<dbReference type="InterPro" id="IPR022803">
    <property type="entry name" value="Ribosomal_uL5_dom_sf"/>
</dbReference>
<dbReference type="InterPro" id="IPR031310">
    <property type="entry name" value="Ribosomal_uL5_N"/>
</dbReference>
<dbReference type="NCBIfam" id="NF003258">
    <property type="entry name" value="PRK04219.1"/>
    <property type="match status" value="1"/>
</dbReference>
<dbReference type="PANTHER" id="PTHR11994">
    <property type="entry name" value="60S RIBOSOMAL PROTEIN L11-RELATED"/>
    <property type="match status" value="1"/>
</dbReference>
<dbReference type="Pfam" id="PF00281">
    <property type="entry name" value="Ribosomal_L5"/>
    <property type="match status" value="1"/>
</dbReference>
<dbReference type="Pfam" id="PF00673">
    <property type="entry name" value="Ribosomal_L5_C"/>
    <property type="match status" value="1"/>
</dbReference>
<dbReference type="PIRSF" id="PIRSF002161">
    <property type="entry name" value="Ribosomal_L5"/>
    <property type="match status" value="1"/>
</dbReference>
<dbReference type="SUPFAM" id="SSF55282">
    <property type="entry name" value="RL5-like"/>
    <property type="match status" value="1"/>
</dbReference>
<dbReference type="PROSITE" id="PS00358">
    <property type="entry name" value="RIBOSOMAL_L5"/>
    <property type="match status" value="1"/>
</dbReference>
<sequence>MSVVDEETRRKILEDWESNPMRKPRVGKVTVNIGVGESGDRLQKAYELLQELTGQKPVYTRAKQTNPSFGIRRGQPIGVKVDLRREQAIEFLDWTLDAVDRELHESQFDEFGNVCFGLEEHIALEGVEYDPEIGIFGMDIAVTLERPGFRVMRRRRCRRPVPRRHRLTKEEGIVFMEEEFDVEVLP</sequence>
<organism>
    <name type="scientific">Methanopyrus kandleri (strain AV19 / DSM 6324 / JCM 9639 / NBRC 100938)</name>
    <dbReference type="NCBI Taxonomy" id="190192"/>
    <lineage>
        <taxon>Archaea</taxon>
        <taxon>Methanobacteriati</taxon>
        <taxon>Methanobacteriota</taxon>
        <taxon>Methanomada group</taxon>
        <taxon>Methanopyri</taxon>
        <taxon>Methanopyrales</taxon>
        <taxon>Methanopyraceae</taxon>
        <taxon>Methanopyrus</taxon>
    </lineage>
</organism>
<keyword id="KW-1185">Reference proteome</keyword>
<keyword id="KW-0687">Ribonucleoprotein</keyword>
<keyword id="KW-0689">Ribosomal protein</keyword>
<keyword id="KW-0694">RNA-binding</keyword>
<keyword id="KW-0699">rRNA-binding</keyword>
<keyword id="KW-0820">tRNA-binding</keyword>
<evidence type="ECO:0000255" key="1">
    <source>
        <dbReference type="HAMAP-Rule" id="MF_01333"/>
    </source>
</evidence>
<evidence type="ECO:0000305" key="2"/>
<proteinExistence type="inferred from homology"/>
<feature type="chain" id="PRO_0000125057" description="Large ribosomal subunit protein uL5">
    <location>
        <begin position="1"/>
        <end position="186"/>
    </location>
</feature>
<name>RL5_METKA</name>